<gene>
    <name type="primary">uspA</name>
    <name type="ordered locus">HD_1428</name>
</gene>
<comment type="function">
    <text evidence="1">Required for resistance to DNA-damaging agents.</text>
</comment>
<comment type="subunit">
    <text evidence="1">Homodimer.</text>
</comment>
<comment type="subcellular location">
    <subcellularLocation>
        <location evidence="1">Cytoplasm</location>
    </subcellularLocation>
</comment>
<comment type="similarity">
    <text evidence="2">Belongs to the universal stress protein A family.</text>
</comment>
<accession>Q7VLK1</accession>
<sequence length="141" mass="15684">MYKHILVAVDLSEESLILLRKGAGLAEKCGAKLSLIHVDVNFSDLYTGLIDINMSSVQDGVIEETTKALDELALKIDYPVSQRLNGTGDFSQVLEEAVAKYQIDLLITGHHQDFWSKFMSSTRQVMNNVTVDMLVVPLIDE</sequence>
<protein>
    <recommendedName>
        <fullName>Universal stress protein A homolog</fullName>
    </recommendedName>
</protein>
<organism>
    <name type="scientific">Haemophilus ducreyi (strain 35000HP / ATCC 700724)</name>
    <dbReference type="NCBI Taxonomy" id="233412"/>
    <lineage>
        <taxon>Bacteria</taxon>
        <taxon>Pseudomonadati</taxon>
        <taxon>Pseudomonadota</taxon>
        <taxon>Gammaproteobacteria</taxon>
        <taxon>Pasteurellales</taxon>
        <taxon>Pasteurellaceae</taxon>
        <taxon>Haemophilus</taxon>
    </lineage>
</organism>
<evidence type="ECO:0000250" key="1"/>
<evidence type="ECO:0000305" key="2"/>
<name>USPA_HAEDU</name>
<dbReference type="EMBL" id="AE017143">
    <property type="protein sequence ID" value="AAP96234.1"/>
    <property type="molecule type" value="Genomic_DNA"/>
</dbReference>
<dbReference type="RefSeq" id="WP_010945283.1">
    <property type="nucleotide sequence ID" value="NC_002940.2"/>
</dbReference>
<dbReference type="SMR" id="Q7VLK1"/>
<dbReference type="STRING" id="233412.HD_1428"/>
<dbReference type="KEGG" id="hdu:HD_1428"/>
<dbReference type="eggNOG" id="COG0589">
    <property type="taxonomic scope" value="Bacteria"/>
</dbReference>
<dbReference type="HOGENOM" id="CLU_049301_18_0_6"/>
<dbReference type="OrthoDB" id="9792500at2"/>
<dbReference type="Proteomes" id="UP000001022">
    <property type="component" value="Chromosome"/>
</dbReference>
<dbReference type="GO" id="GO:0005737">
    <property type="term" value="C:cytoplasm"/>
    <property type="evidence" value="ECO:0007669"/>
    <property type="project" value="UniProtKB-SubCell"/>
</dbReference>
<dbReference type="CDD" id="cd23657">
    <property type="entry name" value="USP-A-like"/>
    <property type="match status" value="1"/>
</dbReference>
<dbReference type="Gene3D" id="3.40.50.620">
    <property type="entry name" value="HUPs"/>
    <property type="match status" value="1"/>
</dbReference>
<dbReference type="InterPro" id="IPR014729">
    <property type="entry name" value="Rossmann-like_a/b/a_fold"/>
</dbReference>
<dbReference type="InterPro" id="IPR006015">
    <property type="entry name" value="Universal_stress_UspA"/>
</dbReference>
<dbReference type="InterPro" id="IPR006016">
    <property type="entry name" value="UspA"/>
</dbReference>
<dbReference type="PANTHER" id="PTHR46268">
    <property type="entry name" value="STRESS RESPONSE PROTEIN NHAX"/>
    <property type="match status" value="1"/>
</dbReference>
<dbReference type="PANTHER" id="PTHR46268:SF23">
    <property type="entry name" value="UNIVERSAL STRESS PROTEIN A-RELATED"/>
    <property type="match status" value="1"/>
</dbReference>
<dbReference type="Pfam" id="PF00582">
    <property type="entry name" value="Usp"/>
    <property type="match status" value="1"/>
</dbReference>
<dbReference type="PIRSF" id="PIRSF006276">
    <property type="entry name" value="UspA"/>
    <property type="match status" value="1"/>
</dbReference>
<dbReference type="SUPFAM" id="SSF52402">
    <property type="entry name" value="Adenine nucleotide alpha hydrolases-like"/>
    <property type="match status" value="1"/>
</dbReference>
<keyword id="KW-0963">Cytoplasm</keyword>
<keyword id="KW-1185">Reference proteome</keyword>
<feature type="chain" id="PRO_0000147399" description="Universal stress protein A homolog">
    <location>
        <begin position="1"/>
        <end position="141"/>
    </location>
</feature>
<reference key="1">
    <citation type="submission" date="2003-06" db="EMBL/GenBank/DDBJ databases">
        <title>The complete genome sequence of Haemophilus ducreyi.</title>
        <authorList>
            <person name="Munson R.S. Jr."/>
            <person name="Ray W.C."/>
            <person name="Mahairas G."/>
            <person name="Sabo P."/>
            <person name="Mungur R."/>
            <person name="Johnson L."/>
            <person name="Nguyen D."/>
            <person name="Wang J."/>
            <person name="Forst C."/>
            <person name="Hood L."/>
        </authorList>
    </citation>
    <scope>NUCLEOTIDE SEQUENCE [LARGE SCALE GENOMIC DNA]</scope>
    <source>
        <strain>35000HP / ATCC 700724</strain>
    </source>
</reference>
<proteinExistence type="inferred from homology"/>